<dbReference type="EMBL" id="AE000516">
    <property type="protein sequence ID" value="AAK44998.1"/>
    <property type="molecule type" value="Genomic_DNA"/>
</dbReference>
<dbReference type="PIR" id="E70823">
    <property type="entry name" value="E70823"/>
</dbReference>
<dbReference type="RefSeq" id="WP_003403741.1">
    <property type="nucleotide sequence ID" value="NZ_KK341227.1"/>
</dbReference>
<dbReference type="SMR" id="P9WKS2"/>
<dbReference type="KEGG" id="mtc:MT0763"/>
<dbReference type="PATRIC" id="fig|83331.31.peg.818"/>
<dbReference type="HOGENOM" id="CLU_051661_2_1_11"/>
<dbReference type="Proteomes" id="UP000001020">
    <property type="component" value="Chromosome"/>
</dbReference>
<dbReference type="GO" id="GO:0046872">
    <property type="term" value="F:metal ion binding"/>
    <property type="evidence" value="ECO:0007669"/>
    <property type="project" value="InterPro"/>
</dbReference>
<dbReference type="Gene3D" id="1.20.120.450">
    <property type="entry name" value="dinb family like domain"/>
    <property type="match status" value="1"/>
</dbReference>
<dbReference type="InterPro" id="IPR017520">
    <property type="entry name" value="CHP03086"/>
</dbReference>
<dbReference type="InterPro" id="IPR034660">
    <property type="entry name" value="DinB/YfiT-like"/>
</dbReference>
<dbReference type="InterPro" id="IPR017517">
    <property type="entry name" value="Maleyloyr_isom"/>
</dbReference>
<dbReference type="InterPro" id="IPR024344">
    <property type="entry name" value="MDMPI_metal-binding"/>
</dbReference>
<dbReference type="NCBIfam" id="TIGR03083">
    <property type="entry name" value="maleylpyruvate isomerase family mycothiol-dependent enzyme"/>
    <property type="match status" value="1"/>
</dbReference>
<dbReference type="NCBIfam" id="TIGR03086">
    <property type="entry name" value="TIGR03086 family metal-binding protein"/>
    <property type="match status" value="1"/>
</dbReference>
<dbReference type="Pfam" id="PF11716">
    <property type="entry name" value="MDMPI_N"/>
    <property type="match status" value="1"/>
</dbReference>
<dbReference type="SUPFAM" id="SSF109854">
    <property type="entry name" value="DinB/YfiT-like putative metalloenzymes"/>
    <property type="match status" value="1"/>
</dbReference>
<protein>
    <recommendedName>
        <fullName>Uncharacterized protein MT0763</fullName>
    </recommendedName>
</protein>
<reference key="1">
    <citation type="journal article" date="2002" name="J. Bacteriol.">
        <title>Whole-genome comparison of Mycobacterium tuberculosis clinical and laboratory strains.</title>
        <authorList>
            <person name="Fleischmann R.D."/>
            <person name="Alland D."/>
            <person name="Eisen J.A."/>
            <person name="Carpenter L."/>
            <person name="White O."/>
            <person name="Peterson J.D."/>
            <person name="DeBoy R.T."/>
            <person name="Dodson R.J."/>
            <person name="Gwinn M.L."/>
            <person name="Haft D.H."/>
            <person name="Hickey E.K."/>
            <person name="Kolonay J.F."/>
            <person name="Nelson W.C."/>
            <person name="Umayam L.A."/>
            <person name="Ermolaeva M.D."/>
            <person name="Salzberg S.L."/>
            <person name="Delcher A."/>
            <person name="Utterback T.R."/>
            <person name="Weidman J.F."/>
            <person name="Khouri H.M."/>
            <person name="Gill J."/>
            <person name="Mikula A."/>
            <person name="Bishai W."/>
            <person name="Jacobs W.R. Jr."/>
            <person name="Venter J.C."/>
            <person name="Fraser C.M."/>
        </authorList>
    </citation>
    <scope>NUCLEOTIDE SEQUENCE [LARGE SCALE GENOMIC DNA]</scope>
    <source>
        <strain>CDC 1551 / Oshkosh</strain>
    </source>
</reference>
<keyword id="KW-1185">Reference proteome</keyword>
<organism>
    <name type="scientific">Mycobacterium tuberculosis (strain CDC 1551 / Oshkosh)</name>
    <dbReference type="NCBI Taxonomy" id="83331"/>
    <lineage>
        <taxon>Bacteria</taxon>
        <taxon>Bacillati</taxon>
        <taxon>Actinomycetota</taxon>
        <taxon>Actinomycetes</taxon>
        <taxon>Mycobacteriales</taxon>
        <taxon>Mycobacteriaceae</taxon>
        <taxon>Mycobacterium</taxon>
        <taxon>Mycobacterium tuberculosis complex</taxon>
    </lineage>
</organism>
<sequence>MDPLMAHQRAQDAFAALLANVRADQLGGPTPCSEWTINDLIEHVVGGNEQVGRWAASPIEPPARPDGLVAAHQAAAAVAHEIFAAPGGMSATFKLPLGEVPGQVFIGLRTTDVLTHAWDLAAATGQSTDLDPELAVERLAAARALVGPQFRGPGKPFADEKPCPRERPPADQLAAFLGRTVR</sequence>
<feature type="chain" id="PRO_0000427604" description="Uncharacterized protein MT0763">
    <location>
        <begin position="1"/>
        <end position="182"/>
    </location>
</feature>
<feature type="region of interest" description="Disordered" evidence="1">
    <location>
        <begin position="151"/>
        <end position="172"/>
    </location>
</feature>
<feature type="compositionally biased region" description="Basic and acidic residues" evidence="1">
    <location>
        <begin position="157"/>
        <end position="169"/>
    </location>
</feature>
<name>Y738_MYCTO</name>
<proteinExistence type="predicted"/>
<evidence type="ECO:0000256" key="1">
    <source>
        <dbReference type="SAM" id="MobiDB-lite"/>
    </source>
</evidence>
<gene>
    <name type="ordered locus">MT0763</name>
</gene>
<accession>P9WKS2</accession>
<accession>L0T7C5</accession>
<accession>O53801</accession>
<accession>Q7D9D1</accession>